<sequence>MKADIHPNYVEIDATCSCGNVIKTRSTIGKNISLDVCSECHPFYTGKQKVLDTGGRIDRFKQRFGVFGAK</sequence>
<name>RL31_ECTM1</name>
<proteinExistence type="inferred from homology"/>
<accession>A4XPP1</accession>
<evidence type="ECO:0000255" key="1">
    <source>
        <dbReference type="HAMAP-Rule" id="MF_00501"/>
    </source>
</evidence>
<evidence type="ECO:0000305" key="2"/>
<comment type="function">
    <text evidence="1">Binds the 23S rRNA.</text>
</comment>
<comment type="cofactor">
    <cofactor evidence="1">
        <name>Zn(2+)</name>
        <dbReference type="ChEBI" id="CHEBI:29105"/>
    </cofactor>
    <text evidence="1">Binds 1 zinc ion per subunit.</text>
</comment>
<comment type="subunit">
    <text evidence="1">Part of the 50S ribosomal subunit.</text>
</comment>
<comment type="similarity">
    <text evidence="1">Belongs to the bacterial ribosomal protein bL31 family. Type A subfamily.</text>
</comment>
<organism>
    <name type="scientific">Ectopseudomonas mendocina (strain ymp)</name>
    <name type="common">Pseudomonas mendocina</name>
    <dbReference type="NCBI Taxonomy" id="399739"/>
    <lineage>
        <taxon>Bacteria</taxon>
        <taxon>Pseudomonadati</taxon>
        <taxon>Pseudomonadota</taxon>
        <taxon>Gammaproteobacteria</taxon>
        <taxon>Pseudomonadales</taxon>
        <taxon>Pseudomonadaceae</taxon>
        <taxon>Ectopseudomonas</taxon>
    </lineage>
</organism>
<gene>
    <name evidence="1" type="primary">rpmE</name>
    <name type="ordered locus">Pmen_0537</name>
</gene>
<dbReference type="EMBL" id="CP000680">
    <property type="protein sequence ID" value="ABP83307.1"/>
    <property type="molecule type" value="Genomic_DNA"/>
</dbReference>
<dbReference type="SMR" id="A4XPP1"/>
<dbReference type="STRING" id="399739.Pmen_0537"/>
<dbReference type="KEGG" id="pmy:Pmen_0537"/>
<dbReference type="PATRIC" id="fig|399739.8.peg.545"/>
<dbReference type="eggNOG" id="COG0254">
    <property type="taxonomic scope" value="Bacteria"/>
</dbReference>
<dbReference type="HOGENOM" id="CLU_114306_4_3_6"/>
<dbReference type="OrthoDB" id="9803251at2"/>
<dbReference type="GO" id="GO:1990904">
    <property type="term" value="C:ribonucleoprotein complex"/>
    <property type="evidence" value="ECO:0007669"/>
    <property type="project" value="UniProtKB-KW"/>
</dbReference>
<dbReference type="GO" id="GO:0005840">
    <property type="term" value="C:ribosome"/>
    <property type="evidence" value="ECO:0007669"/>
    <property type="project" value="UniProtKB-KW"/>
</dbReference>
<dbReference type="GO" id="GO:0046872">
    <property type="term" value="F:metal ion binding"/>
    <property type="evidence" value="ECO:0007669"/>
    <property type="project" value="UniProtKB-KW"/>
</dbReference>
<dbReference type="GO" id="GO:0019843">
    <property type="term" value="F:rRNA binding"/>
    <property type="evidence" value="ECO:0007669"/>
    <property type="project" value="UniProtKB-KW"/>
</dbReference>
<dbReference type="GO" id="GO:0003735">
    <property type="term" value="F:structural constituent of ribosome"/>
    <property type="evidence" value="ECO:0007669"/>
    <property type="project" value="InterPro"/>
</dbReference>
<dbReference type="GO" id="GO:0006412">
    <property type="term" value="P:translation"/>
    <property type="evidence" value="ECO:0007669"/>
    <property type="project" value="UniProtKB-UniRule"/>
</dbReference>
<dbReference type="Gene3D" id="4.10.830.30">
    <property type="entry name" value="Ribosomal protein L31"/>
    <property type="match status" value="1"/>
</dbReference>
<dbReference type="HAMAP" id="MF_00501">
    <property type="entry name" value="Ribosomal_bL31_1"/>
    <property type="match status" value="1"/>
</dbReference>
<dbReference type="InterPro" id="IPR034704">
    <property type="entry name" value="Ribosomal_bL28/bL31-like_sf"/>
</dbReference>
<dbReference type="InterPro" id="IPR002150">
    <property type="entry name" value="Ribosomal_bL31"/>
</dbReference>
<dbReference type="InterPro" id="IPR027491">
    <property type="entry name" value="Ribosomal_bL31_A"/>
</dbReference>
<dbReference type="InterPro" id="IPR042105">
    <property type="entry name" value="Ribosomal_bL31_sf"/>
</dbReference>
<dbReference type="NCBIfam" id="TIGR00105">
    <property type="entry name" value="L31"/>
    <property type="match status" value="1"/>
</dbReference>
<dbReference type="NCBIfam" id="NF000612">
    <property type="entry name" value="PRK00019.1"/>
    <property type="match status" value="1"/>
</dbReference>
<dbReference type="NCBIfam" id="NF001809">
    <property type="entry name" value="PRK00528.1"/>
    <property type="match status" value="1"/>
</dbReference>
<dbReference type="PANTHER" id="PTHR33280">
    <property type="entry name" value="50S RIBOSOMAL PROTEIN L31, CHLOROPLASTIC"/>
    <property type="match status" value="1"/>
</dbReference>
<dbReference type="PANTHER" id="PTHR33280:SF6">
    <property type="entry name" value="LARGE RIBOSOMAL SUBUNIT PROTEIN BL31A"/>
    <property type="match status" value="1"/>
</dbReference>
<dbReference type="Pfam" id="PF01197">
    <property type="entry name" value="Ribosomal_L31"/>
    <property type="match status" value="1"/>
</dbReference>
<dbReference type="PRINTS" id="PR01249">
    <property type="entry name" value="RIBOSOMALL31"/>
</dbReference>
<dbReference type="SUPFAM" id="SSF143800">
    <property type="entry name" value="L28p-like"/>
    <property type="match status" value="1"/>
</dbReference>
<dbReference type="PROSITE" id="PS01143">
    <property type="entry name" value="RIBOSOMAL_L31"/>
    <property type="match status" value="1"/>
</dbReference>
<protein>
    <recommendedName>
        <fullName evidence="1">Large ribosomal subunit protein bL31</fullName>
    </recommendedName>
    <alternativeName>
        <fullName evidence="2">50S ribosomal protein L31</fullName>
    </alternativeName>
</protein>
<keyword id="KW-0479">Metal-binding</keyword>
<keyword id="KW-0687">Ribonucleoprotein</keyword>
<keyword id="KW-0689">Ribosomal protein</keyword>
<keyword id="KW-0694">RNA-binding</keyword>
<keyword id="KW-0699">rRNA-binding</keyword>
<keyword id="KW-0862">Zinc</keyword>
<reference key="1">
    <citation type="submission" date="2007-04" db="EMBL/GenBank/DDBJ databases">
        <title>Complete sequence of Pseudomonas mendocina ymp.</title>
        <authorList>
            <consortium name="US DOE Joint Genome Institute"/>
            <person name="Copeland A."/>
            <person name="Lucas S."/>
            <person name="Lapidus A."/>
            <person name="Barry K."/>
            <person name="Glavina del Rio T."/>
            <person name="Dalin E."/>
            <person name="Tice H."/>
            <person name="Pitluck S."/>
            <person name="Kiss H."/>
            <person name="Brettin T."/>
            <person name="Detter J.C."/>
            <person name="Bruce D."/>
            <person name="Han C."/>
            <person name="Schmutz J."/>
            <person name="Larimer F."/>
            <person name="Land M."/>
            <person name="Hauser L."/>
            <person name="Kyrpides N."/>
            <person name="Mikhailova N."/>
            <person name="Hersman L."/>
            <person name="Dubois J."/>
            <person name="Maurice P."/>
            <person name="Richardson P."/>
        </authorList>
    </citation>
    <scope>NUCLEOTIDE SEQUENCE [LARGE SCALE GENOMIC DNA]</scope>
    <source>
        <strain>ymp</strain>
    </source>
</reference>
<feature type="chain" id="PRO_1000126701" description="Large ribosomal subunit protein bL31">
    <location>
        <begin position="1"/>
        <end position="70"/>
    </location>
</feature>
<feature type="binding site" evidence="1">
    <location>
        <position position="16"/>
    </location>
    <ligand>
        <name>Zn(2+)</name>
        <dbReference type="ChEBI" id="CHEBI:29105"/>
    </ligand>
</feature>
<feature type="binding site" evidence="1">
    <location>
        <position position="18"/>
    </location>
    <ligand>
        <name>Zn(2+)</name>
        <dbReference type="ChEBI" id="CHEBI:29105"/>
    </ligand>
</feature>
<feature type="binding site" evidence="1">
    <location>
        <position position="37"/>
    </location>
    <ligand>
        <name>Zn(2+)</name>
        <dbReference type="ChEBI" id="CHEBI:29105"/>
    </ligand>
</feature>
<feature type="binding site" evidence="1">
    <location>
        <position position="40"/>
    </location>
    <ligand>
        <name>Zn(2+)</name>
        <dbReference type="ChEBI" id="CHEBI:29105"/>
    </ligand>
</feature>